<comment type="function">
    <text evidence="2 9">Required for ciliogenesis, particularly in neuronal and retinal progenitor cells (By similarity). Phosphorylates KIF3A (By similarity). Involved in the control of ciliary length (By similarity). Regulates the ciliary localization of SHH pathway components as well as the localization of IFT components at ciliary tips (By similarity). May play a role in cardiac development (PubMed:8570168). Regulates intraflagellar transport (IFT) speed and negatively regulates cilium length in a cAMP and mTORC1 signaling-dependent manner and this regulation requires its kinase activity (By similarity).</text>
</comment>
<comment type="catalytic activity">
    <reaction evidence="8">
        <text>L-seryl-[protein] + ATP = O-phospho-L-seryl-[protein] + ADP + H(+)</text>
        <dbReference type="Rhea" id="RHEA:17989"/>
        <dbReference type="Rhea" id="RHEA-COMP:9863"/>
        <dbReference type="Rhea" id="RHEA-COMP:11604"/>
        <dbReference type="ChEBI" id="CHEBI:15378"/>
        <dbReference type="ChEBI" id="CHEBI:29999"/>
        <dbReference type="ChEBI" id="CHEBI:30616"/>
        <dbReference type="ChEBI" id="CHEBI:83421"/>
        <dbReference type="ChEBI" id="CHEBI:456216"/>
        <dbReference type="EC" id="2.7.11.1"/>
    </reaction>
</comment>
<comment type="catalytic activity">
    <reaction evidence="8">
        <text>L-threonyl-[protein] + ATP = O-phospho-L-threonyl-[protein] + ADP + H(+)</text>
        <dbReference type="Rhea" id="RHEA:46608"/>
        <dbReference type="Rhea" id="RHEA-COMP:11060"/>
        <dbReference type="Rhea" id="RHEA-COMP:11605"/>
        <dbReference type="ChEBI" id="CHEBI:15378"/>
        <dbReference type="ChEBI" id="CHEBI:30013"/>
        <dbReference type="ChEBI" id="CHEBI:30616"/>
        <dbReference type="ChEBI" id="CHEBI:61977"/>
        <dbReference type="ChEBI" id="CHEBI:456216"/>
        <dbReference type="EC" id="2.7.11.1"/>
    </reaction>
</comment>
<comment type="cofactor">
    <cofactor evidence="8">
        <name>Mg(2+)</name>
        <dbReference type="ChEBI" id="CHEBI:18420"/>
    </cofactor>
</comment>
<comment type="subcellular location">
    <subcellularLocation>
        <location evidence="8">Cytoplasm</location>
    </subcellularLocation>
    <subcellularLocation>
        <location evidence="2">Cell projection</location>
        <location evidence="2">Cilium</location>
    </subcellularLocation>
    <subcellularLocation>
        <location evidence="4">Nucleus</location>
    </subcellularLocation>
    <subcellularLocation>
        <location evidence="2">Cytoplasm</location>
        <location evidence="2">Cytoskeleton</location>
        <location evidence="2">Cilium basal body</location>
    </subcellularLocation>
    <text evidence="2">Also found at the ciliary tip.</text>
</comment>
<comment type="tissue specificity">
    <text evidence="8">Expressed in embryonic heart from day 11. Highly expressed in the uterus and at lower levels in brain, heart, lung, kidney, skeletal muscle, ovary and liver in adult tissues.</text>
</comment>
<comment type="PTM">
    <text evidence="2 3 8">Autophosphorylated on serine and threonine residues (PubMed:8570168). Phosphorylation at Thr-157 increases kinase activity (By similarity).</text>
</comment>
<comment type="similarity">
    <text evidence="10">Belongs to the protein kinase superfamily. CMGC Ser/Thr protein kinase family. CDC2/CDKX subfamily.</text>
</comment>
<name>CILK1_RAT</name>
<feature type="chain" id="PRO_0000086009" description="Serine/threonine-protein kinase ICK">
    <location>
        <begin position="1"/>
        <end position="629"/>
    </location>
</feature>
<feature type="domain" description="Protein kinase" evidence="5 10">
    <location>
        <begin position="4"/>
        <end position="284"/>
    </location>
</feature>
<feature type="region of interest" description="Disordered" evidence="7">
    <location>
        <begin position="292"/>
        <end position="322"/>
    </location>
</feature>
<feature type="region of interest" description="Disordered" evidence="7">
    <location>
        <begin position="454"/>
        <end position="482"/>
    </location>
</feature>
<feature type="region of interest" description="Disordered" evidence="7">
    <location>
        <begin position="579"/>
        <end position="629"/>
    </location>
</feature>
<feature type="compositionally biased region" description="Pro residues" evidence="7">
    <location>
        <begin position="309"/>
        <end position="321"/>
    </location>
</feature>
<feature type="compositionally biased region" description="Polar residues" evidence="7">
    <location>
        <begin position="460"/>
        <end position="482"/>
    </location>
</feature>
<feature type="active site" description="Proton acceptor" evidence="5 6">
    <location>
        <position position="125"/>
    </location>
</feature>
<feature type="binding site" evidence="1 5">
    <location>
        <begin position="10"/>
        <end position="18"/>
    </location>
    <ligand>
        <name>ATP</name>
        <dbReference type="ChEBI" id="CHEBI:30616"/>
    </ligand>
</feature>
<feature type="binding site" evidence="3 5">
    <location>
        <position position="33"/>
    </location>
    <ligand>
        <name>ATP</name>
        <dbReference type="ChEBI" id="CHEBI:30616"/>
    </ligand>
</feature>
<feature type="modified residue" description="Phosphothreonine" evidence="4">
    <location>
        <position position="157"/>
    </location>
</feature>
<feature type="modified residue" description="Phosphotyrosine" evidence="4">
    <location>
        <position position="159"/>
    </location>
</feature>
<feature type="modified residue" description="Phosphoserine" evidence="2">
    <location>
        <position position="161"/>
    </location>
</feature>
<evidence type="ECO:0000250" key="1">
    <source>
        <dbReference type="UniProtKB" id="P06493"/>
    </source>
</evidence>
<evidence type="ECO:0000250" key="2">
    <source>
        <dbReference type="UniProtKB" id="Q9JKV2"/>
    </source>
</evidence>
<evidence type="ECO:0000250" key="3">
    <source>
        <dbReference type="UniProtKB" id="Q9NYX3"/>
    </source>
</evidence>
<evidence type="ECO:0000250" key="4">
    <source>
        <dbReference type="UniProtKB" id="Q9UPZ9"/>
    </source>
</evidence>
<evidence type="ECO:0000255" key="5">
    <source>
        <dbReference type="PROSITE-ProRule" id="PRU00159"/>
    </source>
</evidence>
<evidence type="ECO:0000255" key="6">
    <source>
        <dbReference type="PROSITE-ProRule" id="PRU10027"/>
    </source>
</evidence>
<evidence type="ECO:0000256" key="7">
    <source>
        <dbReference type="SAM" id="MobiDB-lite"/>
    </source>
</evidence>
<evidence type="ECO:0000269" key="8">
    <source>
    </source>
</evidence>
<evidence type="ECO:0000303" key="9">
    <source>
    </source>
</evidence>
<evidence type="ECO:0000305" key="10"/>
<evidence type="ECO:0000312" key="11">
    <source>
        <dbReference type="EMBL" id="BAA05166.1"/>
    </source>
</evidence>
<keyword id="KW-0067">ATP-binding</keyword>
<keyword id="KW-0966">Cell projection</keyword>
<keyword id="KW-0970">Cilium biogenesis/degradation</keyword>
<keyword id="KW-0963">Cytoplasm</keyword>
<keyword id="KW-0206">Cytoskeleton</keyword>
<keyword id="KW-0217">Developmental protein</keyword>
<keyword id="KW-0418">Kinase</keyword>
<keyword id="KW-0460">Magnesium</keyword>
<keyword id="KW-0479">Metal-binding</keyword>
<keyword id="KW-0547">Nucleotide-binding</keyword>
<keyword id="KW-0539">Nucleus</keyword>
<keyword id="KW-0597">Phosphoprotein</keyword>
<keyword id="KW-1185">Reference proteome</keyword>
<keyword id="KW-0723">Serine/threonine-protein kinase</keyword>
<keyword id="KW-0808">Transferase</keyword>
<gene>
    <name type="primary">Cilk1</name>
    <name type="synonym">Ick</name>
</gene>
<protein>
    <recommendedName>
        <fullName>Serine/threonine-protein kinase ICK</fullName>
        <ecNumber evidence="8">2.7.11.1</ecNumber>
    </recommendedName>
    <alternativeName>
        <fullName>Intestinal cell kinase</fullName>
    </alternativeName>
    <alternativeName>
        <fullName>MAK-related kinase</fullName>
        <shortName>MRK</shortName>
    </alternativeName>
</protein>
<dbReference type="EC" id="2.7.11.1" evidence="8"/>
<dbReference type="EMBL" id="D26178">
    <property type="protein sequence ID" value="BAA05166.1"/>
    <property type="molecule type" value="mRNA"/>
</dbReference>
<dbReference type="RefSeq" id="NP_620241.1">
    <property type="nucleotide sequence ID" value="NM_138886.1"/>
</dbReference>
<dbReference type="SMR" id="Q62726"/>
<dbReference type="FunCoup" id="Q62726">
    <property type="interactions" value="1526"/>
</dbReference>
<dbReference type="STRING" id="10116.ENSRNOP00000068950"/>
<dbReference type="iPTMnet" id="Q62726"/>
<dbReference type="PhosphoSitePlus" id="Q62726"/>
<dbReference type="PaxDb" id="10116-ENSRNOP00000012257"/>
<dbReference type="ABCD" id="Q62726">
    <property type="antibodies" value="1 sequenced antibody"/>
</dbReference>
<dbReference type="GeneID" id="84411"/>
<dbReference type="KEGG" id="rno:84411"/>
<dbReference type="UCSC" id="RGD:71050">
    <property type="organism name" value="rat"/>
</dbReference>
<dbReference type="AGR" id="RGD:71050"/>
<dbReference type="CTD" id="22858"/>
<dbReference type="RGD" id="71050">
    <property type="gene designation" value="Cilk1"/>
</dbReference>
<dbReference type="eggNOG" id="KOG0661">
    <property type="taxonomic scope" value="Eukaryota"/>
</dbReference>
<dbReference type="InParanoid" id="Q62726"/>
<dbReference type="OrthoDB" id="2158884at2759"/>
<dbReference type="PhylomeDB" id="Q62726"/>
<dbReference type="PRO" id="PR:Q62726"/>
<dbReference type="Proteomes" id="UP000002494">
    <property type="component" value="Unplaced"/>
</dbReference>
<dbReference type="GO" id="GO:0036064">
    <property type="term" value="C:ciliary basal body"/>
    <property type="evidence" value="ECO:0000250"/>
    <property type="project" value="UniProtKB"/>
</dbReference>
<dbReference type="GO" id="GO:0097546">
    <property type="term" value="C:ciliary base"/>
    <property type="evidence" value="ECO:0000250"/>
    <property type="project" value="UniProtKB"/>
</dbReference>
<dbReference type="GO" id="GO:0097542">
    <property type="term" value="C:ciliary tip"/>
    <property type="evidence" value="ECO:0000250"/>
    <property type="project" value="UniProtKB"/>
</dbReference>
<dbReference type="GO" id="GO:0005929">
    <property type="term" value="C:cilium"/>
    <property type="evidence" value="ECO:0000250"/>
    <property type="project" value="UniProtKB"/>
</dbReference>
<dbReference type="GO" id="GO:0005737">
    <property type="term" value="C:cytoplasm"/>
    <property type="evidence" value="ECO:0000314"/>
    <property type="project" value="UniProtKB"/>
</dbReference>
<dbReference type="GO" id="GO:0005634">
    <property type="term" value="C:nucleus"/>
    <property type="evidence" value="ECO:0000250"/>
    <property type="project" value="UniProtKB"/>
</dbReference>
<dbReference type="GO" id="GO:0005524">
    <property type="term" value="F:ATP binding"/>
    <property type="evidence" value="ECO:0000314"/>
    <property type="project" value="UniProtKB"/>
</dbReference>
<dbReference type="GO" id="GO:0000287">
    <property type="term" value="F:magnesium ion binding"/>
    <property type="evidence" value="ECO:0000266"/>
    <property type="project" value="RGD"/>
</dbReference>
<dbReference type="GO" id="GO:0004672">
    <property type="term" value="F:protein kinase activity"/>
    <property type="evidence" value="ECO:0000266"/>
    <property type="project" value="RGD"/>
</dbReference>
<dbReference type="GO" id="GO:0106310">
    <property type="term" value="F:protein serine kinase activity"/>
    <property type="evidence" value="ECO:0007669"/>
    <property type="project" value="RHEA"/>
</dbReference>
<dbReference type="GO" id="GO:0004674">
    <property type="term" value="F:protein serine/threonine kinase activity"/>
    <property type="evidence" value="ECO:0000314"/>
    <property type="project" value="UniProtKB"/>
</dbReference>
<dbReference type="GO" id="GO:0060271">
    <property type="term" value="P:cilium assembly"/>
    <property type="evidence" value="ECO:0000250"/>
    <property type="project" value="UniProtKB"/>
</dbReference>
<dbReference type="GO" id="GO:0035556">
    <property type="term" value="P:intracellular signal transduction"/>
    <property type="evidence" value="ECO:0000314"/>
    <property type="project" value="UniProtKB"/>
</dbReference>
<dbReference type="GO" id="GO:0035720">
    <property type="term" value="P:intraciliary anterograde transport"/>
    <property type="evidence" value="ECO:0000250"/>
    <property type="project" value="UniProtKB"/>
</dbReference>
<dbReference type="GO" id="GO:0035721">
    <property type="term" value="P:intraciliary retrograde transport"/>
    <property type="evidence" value="ECO:0000250"/>
    <property type="project" value="UniProtKB"/>
</dbReference>
<dbReference type="GO" id="GO:0042073">
    <property type="term" value="P:intraciliary transport"/>
    <property type="evidence" value="ECO:0000250"/>
    <property type="project" value="UniProtKB"/>
</dbReference>
<dbReference type="GO" id="GO:0006468">
    <property type="term" value="P:protein phosphorylation"/>
    <property type="evidence" value="ECO:0000314"/>
    <property type="project" value="UniProtKB"/>
</dbReference>
<dbReference type="CDD" id="cd07830">
    <property type="entry name" value="STKc_MAK_like"/>
    <property type="match status" value="1"/>
</dbReference>
<dbReference type="FunFam" id="1.10.510.10:FF:000104">
    <property type="entry name" value="serine/threonine-protein kinase MAK isoform X1"/>
    <property type="match status" value="1"/>
</dbReference>
<dbReference type="FunFam" id="3.30.200.20:FF:000071">
    <property type="entry name" value="serine/threonine-protein kinase MAK isoform X1"/>
    <property type="match status" value="1"/>
</dbReference>
<dbReference type="Gene3D" id="3.30.200.20">
    <property type="entry name" value="Phosphorylase Kinase, domain 1"/>
    <property type="match status" value="1"/>
</dbReference>
<dbReference type="Gene3D" id="1.10.510.10">
    <property type="entry name" value="Transferase(Phosphotransferase) domain 1"/>
    <property type="match status" value="1"/>
</dbReference>
<dbReference type="InterPro" id="IPR011009">
    <property type="entry name" value="Kinase-like_dom_sf"/>
</dbReference>
<dbReference type="InterPro" id="IPR050117">
    <property type="entry name" value="MAP_kinase"/>
</dbReference>
<dbReference type="InterPro" id="IPR000719">
    <property type="entry name" value="Prot_kinase_dom"/>
</dbReference>
<dbReference type="InterPro" id="IPR017441">
    <property type="entry name" value="Protein_kinase_ATP_BS"/>
</dbReference>
<dbReference type="InterPro" id="IPR008271">
    <property type="entry name" value="Ser/Thr_kinase_AS"/>
</dbReference>
<dbReference type="PANTHER" id="PTHR24055">
    <property type="entry name" value="MITOGEN-ACTIVATED PROTEIN KINASE"/>
    <property type="match status" value="1"/>
</dbReference>
<dbReference type="Pfam" id="PF00069">
    <property type="entry name" value="Pkinase"/>
    <property type="match status" value="1"/>
</dbReference>
<dbReference type="SMART" id="SM00220">
    <property type="entry name" value="S_TKc"/>
    <property type="match status" value="1"/>
</dbReference>
<dbReference type="SUPFAM" id="SSF56112">
    <property type="entry name" value="Protein kinase-like (PK-like)"/>
    <property type="match status" value="1"/>
</dbReference>
<dbReference type="PROSITE" id="PS00107">
    <property type="entry name" value="PROTEIN_KINASE_ATP"/>
    <property type="match status" value="1"/>
</dbReference>
<dbReference type="PROSITE" id="PS50011">
    <property type="entry name" value="PROTEIN_KINASE_DOM"/>
    <property type="match status" value="1"/>
</dbReference>
<dbReference type="PROSITE" id="PS00108">
    <property type="entry name" value="PROTEIN_KINASE_ST"/>
    <property type="match status" value="1"/>
</dbReference>
<reference evidence="10" key="1">
    <citation type="journal article" date="1995" name="Oncogene">
        <title>Molecular cloning of a novel serine/threonine kinase, MRK, possibly involved in cardiac development.</title>
        <authorList>
            <person name="Abe S."/>
            <person name="Yagi T."/>
            <person name="Ishiyama S."/>
            <person name="Hiroe M."/>
            <person name="Marumo F."/>
            <person name="Ikawa Y."/>
        </authorList>
    </citation>
    <scope>NUCLEOTIDE SEQUENCE [MRNA]</scope>
    <scope>FUNCTION</scope>
    <scope>CATALYTIC ACTIVITY</scope>
    <scope>COFACTOR</scope>
    <scope>SUBCELLULAR LOCATION</scope>
    <scope>TISSUE SPECIFICITY</scope>
    <scope>AUTOPHOSPHORYLATION</scope>
    <source>
        <tissue evidence="11">Heart</tissue>
    </source>
</reference>
<accession>Q62726</accession>
<sequence length="629" mass="70569">MNRYTTIKQLGDGTYGSVLLGRSIESGELIAIKKMKRKFYSWEECMNLREVKSLKKLNHANIVKLKEVIRENDHLYFIFEYMKENLYQLIKERNKLFPESAIRNIMYQILQGLAFIHKHGFFHRDLKPENLLCMGPELVKIADFGLAREIRSRPPYTDYVSTRWYRAPEVLLRSTNYSSPIDVWAVGCIMAEVYTLRPLFPGASEIDTIFKICQVLGTPKKTDWPEGYQLSSAMNFIWPQCIPNNLKTLIPNASSEAIQLLRDLLQWDPKKRPTASQALRYPYFQIGHPLGISTQDSGKPQKDVQDKTGPPPYVKPAPPAQAPTKAHTLISSRPNQASQPHQHFVYPYKGEASRTEQLSHVQEGQPNPPFFPSLHNKNLPPKILAGLEQKSGDMKPKSRRRWGLISRSTKGSDDWADLADLDFSSSLTRIDVKNKKRQSDDPLCRFESVLDLKPSEPVGTGTSVSTQASSQRRDTPTLQSTAKQHYLKHSRYLPGINIRNGVLPNPGKDFLPSSSWSSSGLSGKSSGTVSVVSKITSVGSGSTSSTGLTGSYIPSFLKKEVGSVMQRVQLAPLAAPSPGYSSLKAVRPHPGRPFFHTQPRSTPGLIPRPPAVQPVHGRIDWSSKYPSRR</sequence>
<organism evidence="11">
    <name type="scientific">Rattus norvegicus</name>
    <name type="common">Rat</name>
    <dbReference type="NCBI Taxonomy" id="10116"/>
    <lineage>
        <taxon>Eukaryota</taxon>
        <taxon>Metazoa</taxon>
        <taxon>Chordata</taxon>
        <taxon>Craniata</taxon>
        <taxon>Vertebrata</taxon>
        <taxon>Euteleostomi</taxon>
        <taxon>Mammalia</taxon>
        <taxon>Eutheria</taxon>
        <taxon>Euarchontoglires</taxon>
        <taxon>Glires</taxon>
        <taxon>Rodentia</taxon>
        <taxon>Myomorpha</taxon>
        <taxon>Muroidea</taxon>
        <taxon>Muridae</taxon>
        <taxon>Murinae</taxon>
        <taxon>Rattus</taxon>
    </lineage>
</organism>
<proteinExistence type="evidence at protein level"/>